<sequence>MGAFTEKQEALVSSSFEAFKANIPQYSVVFYTSILEKAPAAKDLFSFLSNGVDPSNPKLTGHAEKLFGLVRDSAGQLKANGTVVADAALGSIHAQKAITDPQFVVVKEALLKTIKEAVGDKWSDELSSAWEVAYDELAAAIKKAF</sequence>
<reference key="1">
    <citation type="journal article" date="1982" name="Nucleic Acids Res.">
        <title>The nucleotide sequences of two leghemoglobin genes from soybean.</title>
        <authorList>
            <person name="Wiborg O."/>
            <person name="Hyldig-Nielsen J.J."/>
            <person name="Jensen E.O."/>
            <person name="Paludan K."/>
            <person name="Marcker K.A."/>
        </authorList>
    </citation>
    <scope>NUCLEOTIDE SEQUENCE [GENOMIC DNA]</scope>
</reference>
<reference key="2">
    <citation type="journal article" date="2010" name="Nature">
        <title>Genome sequence of the palaeopolyploid soybean.</title>
        <authorList>
            <person name="Schmutz J."/>
            <person name="Cannon S.B."/>
            <person name="Schlueter J."/>
            <person name="Ma J."/>
            <person name="Mitros T."/>
            <person name="Nelson W."/>
            <person name="Hyten D.L."/>
            <person name="Song Q."/>
            <person name="Thelen J.J."/>
            <person name="Cheng J."/>
            <person name="Xu D."/>
            <person name="Hellsten U."/>
            <person name="May G.D."/>
            <person name="Yu Y."/>
            <person name="Sakurai T."/>
            <person name="Umezawa T."/>
            <person name="Bhattacharyya M.K."/>
            <person name="Sandhu D."/>
            <person name="Valliyodan B."/>
            <person name="Lindquist E."/>
            <person name="Peto M."/>
            <person name="Grant D."/>
            <person name="Shu S."/>
            <person name="Goodstein D."/>
            <person name="Barry K."/>
            <person name="Futrell-Griggs M."/>
            <person name="Abernathy B."/>
            <person name="Du J."/>
            <person name="Tian Z."/>
            <person name="Zhu L."/>
            <person name="Gill N."/>
            <person name="Joshi T."/>
            <person name="Libault M."/>
            <person name="Sethuraman A."/>
            <person name="Zhang X.-C."/>
            <person name="Shinozaki K."/>
            <person name="Nguyen H.T."/>
            <person name="Wing R.A."/>
            <person name="Cregan P."/>
            <person name="Specht J."/>
            <person name="Grimwood J."/>
            <person name="Rokhsar D."/>
            <person name="Stacey G."/>
            <person name="Shoemaker R.C."/>
            <person name="Jackson S.A."/>
        </authorList>
    </citation>
    <scope>NUCLEOTIDE SEQUENCE [LARGE SCALE GENOMIC DNA]</scope>
    <source>
        <strain>cv. Williams 82</strain>
        <tissue>Callus</tissue>
    </source>
</reference>
<reference key="3">
    <citation type="journal article" date="1978" name="Acta Chem. Scand. B">
        <title>The primary structure of soybean (Glycine max) leghemoglobin c.</title>
        <authorList>
            <person name="Sievers G."/>
            <person name="Huhtala M.-L."/>
            <person name="Ellfolk N."/>
        </authorList>
    </citation>
    <scope>PROTEIN SEQUENCE OF 2-145</scope>
</reference>
<reference key="4">
    <citation type="submission" date="1982-11" db="PIR data bank">
        <authorList>
            <person name="Ellfolk N."/>
        </authorList>
    </citation>
    <scope>SEQUENCE REVISION</scope>
</reference>
<reference key="5">
    <citation type="journal article" date="1977" name="FEBS Lett.">
        <title>The amino acid sequence of soybean leghaemoglobin c2.</title>
        <authorList>
            <person name="Hurrell J.G.R."/>
            <person name="Leach S.J."/>
        </authorList>
    </citation>
    <scope>PROTEIN SEQUENCE OF 2-145</scope>
</reference>
<reference key="6">
    <citation type="journal article" date="1981" name="Nature">
        <title>Molecular cloning and organization of two leghemoglobin sequences of soybean.</title>
        <authorList>
            <person name="Sullivan D."/>
            <person name="Brisson N."/>
            <person name="Goodchild B."/>
            <person name="Verma D.P.S."/>
        </authorList>
    </citation>
    <scope>NUCLEOTIDE SEQUENCE [GENOMIC DNA] OF 100-145</scope>
</reference>
<reference key="7">
    <citation type="journal article" date="2007" name="Gene">
        <title>Plant hemoglobins: what we know six decades after their discovery.</title>
        <authorList>
            <person name="Garrocho-Villegas V."/>
            <person name="Gopalasubramaniam S.K."/>
            <person name="Arredondo-Peter R."/>
        </authorList>
    </citation>
    <scope>REVIEW ON PHYTOGLOBINS</scope>
</reference>
<reference key="8">
    <citation type="journal article" date="2008" name="Colloids Surf. B Biointerfaces">
        <title>Soil applied cobalt alters the nodulation, leg-haemoglobin content and antioxidant status of Glycine max (L.) Merr.</title>
        <authorList>
            <person name="Jayakumar K."/>
            <person name="Vijayarengan P."/>
            <person name="Changxing Z."/>
            <person name="Gomathinayagam M."/>
            <person name="Jaleel C.A."/>
        </authorList>
    </citation>
    <scope>REPRESSION BY COBALT</scope>
</reference>
<reference key="9">
    <citation type="journal article" date="2012" name="Proc. Natl. Acad. Sci. U.S.A.">
        <title>Leghemoglobin green derivatives with nitrated hemes evidence production of highly reactive nitrogen species during aging of legume nodules.</title>
        <authorList>
            <person name="Navascues J."/>
            <person name="Perez-Rontome C."/>
            <person name="Gay M."/>
            <person name="Marcos M."/>
            <person name="Yang F."/>
            <person name="Walker F.A."/>
            <person name="Desbois A."/>
            <person name="Abian J."/>
            <person name="Becana M."/>
        </authorList>
    </citation>
    <scope>FUNCTION</scope>
    <scope>NITRATION</scope>
    <scope>UV-VISIBLE; MASS SPECTROMETRY; NMR AND RESONANCE RAMAN SPECTROSCOPIES</scope>
    <scope>ACETYLATION AT GLY-2</scope>
    <source>
        <strain>cv. Hobbit</strain>
        <strain>cv. Williams</strain>
    </source>
</reference>
<reference key="10">
    <citation type="journal article" date="2020" name="Ann. Bot.">
        <title>Excess nitrate induces nodule greening and reduces transcript and protein expression levels of soybean leghaemoglobins.</title>
        <authorList>
            <person name="Du M."/>
            <person name="Gao Z."/>
            <person name="Li X."/>
            <person name="Liao H."/>
        </authorList>
    </citation>
    <scope>FUNCTION</scope>
    <scope>TISSUE SPECIFICITY</scope>
    <scope>DEVELOPMENTAL STAGE</scope>
    <scope>SUPPRESSED BY NITROGEN</scope>
    <scope>GENE FAMILY</scope>
    <scope>NOMENCLATURE</scope>
    <source>
        <strain>cv. HN66</strain>
    </source>
</reference>
<reference key="11">
    <citation type="journal article" date="2022" name="Gene">
        <title>Uncovering the roles of hemoglobins in soybean facing water stress.</title>
        <authorList>
            <person name="Koltun A."/>
            <person name="Fuhrmann-Aoyagi M.B."/>
            <person name="Cardoso Moraes L.A."/>
            <person name="Lima Nepomuceno A."/>
            <person name="Simoes Azeredo Goncalves L."/>
            <person name="Mertz-Henning L.M."/>
        </authorList>
    </citation>
    <scope>FUNCTION</scope>
    <scope>GENE FAMILY</scope>
    <scope>NOMENCLATURE</scope>
    <source>
        <strain>cv. BR-4</strain>
        <strain>cv. Embrapa 45</strain>
    </source>
</reference>
<comment type="function">
    <text evidence="4 7 8 11">Leghemoglobin that reversibly binds oxygen O(2) through a pentacoordinated heme iron (By similarity). In root nodules, facilitates the diffusion of oxygen to the bacteroids while preventing the bacterial nitrogenase from being inactivated by buffering dioxygen, nitric oxide and carbon monoxide, and promoting the formation of reactive oxygen species (ROS, e.g. H(2)O(2)) (PubMed:17540516, PubMed:22308405, PubMed:32297921). This role is essential for symbiotic nitrogen fixation (SNF) (PubMed:17540516, PubMed:32297921).</text>
</comment>
<comment type="subunit">
    <text evidence="2">Monomer.</text>
</comment>
<comment type="subcellular location">
    <subcellularLocation>
        <location evidence="2">Cytoplasm</location>
        <location evidence="2">Cytosol</location>
    </subcellularLocation>
    <subcellularLocation>
        <location evidence="2">Nucleus</location>
    </subcellularLocation>
</comment>
<comment type="tissue specificity">
    <text evidence="8">Specifically expressed in root nodules, and barely in pods.</text>
</comment>
<comment type="developmental stage">
    <text evidence="8">Gradual accumulation in developping and maturating root nodules (PubMed:32297921). Levels decline during nodule senescence (PubMed:32297921).</text>
</comment>
<comment type="induction">
    <text evidence="6 8">Negatively regulated by cobalt (Co) in a dose-dependent manner (PubMed:18838253). Suppressed by exposure to excess nitrogen (N); this repression is associated with nodule greening and reduced biological nitrogen fixation (BN) efficiency (PubMed:32297921).</text>
</comment>
<comment type="PTM">
    <text evidence="1 7">Nitrated mainly at Tyr-31 and, to a lower extent, at Tyr-26 and Tyr-134, in effective nodules and particularly in hypoxic conditions; this mechanism may play a protective role in the symbiosis by buffering toxic peroxynitrite NO(2)(-) (PubMed:22308405). Nitration level decrease during nodule senescence (By similarity).</text>
</comment>
<comment type="PTM">
    <text evidence="3">Phosphorylation at Ser-46 disrupts the molecular environment of its porphyrin ring oxygen binding pocket, thus leading to a reduced oxygen consumption and to the delivery of oxygen O(2) to symbiosomes.</text>
</comment>
<comment type="similarity">
    <text evidence="15">Belongs to the plant globin family.</text>
</comment>
<name>LGB4_SOYBN</name>
<protein>
    <recommendedName>
        <fullName evidence="12">Leghemoglobin 4</fullName>
        <shortName evidence="12">GmLb4</shortName>
    </recommendedName>
    <alternativeName>
        <fullName evidence="13">Hemoglobin 2-5</fullName>
        <shortName evidence="13">GmGLB2-5</shortName>
    </alternativeName>
    <alternativeName>
        <fullName evidence="13 14">Leghemoglobin C2</fullName>
        <shortName evidence="15">GmLbc2</shortName>
    </alternativeName>
</protein>
<evidence type="ECO:0000250" key="1">
    <source>
        <dbReference type="UniProtKB" id="P02235"/>
    </source>
</evidence>
<evidence type="ECO:0000250" key="2">
    <source>
        <dbReference type="UniProtKB" id="P02240"/>
    </source>
</evidence>
<evidence type="ECO:0000250" key="3">
    <source>
        <dbReference type="UniProtKB" id="Q3C1F7"/>
    </source>
</evidence>
<evidence type="ECO:0000250" key="4">
    <source>
        <dbReference type="UniProtKB" id="Q43296"/>
    </source>
</evidence>
<evidence type="ECO:0000255" key="5">
    <source>
        <dbReference type="PROSITE-ProRule" id="PRU00238"/>
    </source>
</evidence>
<evidence type="ECO:0000269" key="6">
    <source>
    </source>
</evidence>
<evidence type="ECO:0000269" key="7">
    <source>
    </source>
</evidence>
<evidence type="ECO:0000269" key="8">
    <source>
    </source>
</evidence>
<evidence type="ECO:0000269" key="9">
    <source>
    </source>
</evidence>
<evidence type="ECO:0000269" key="10">
    <source ref="3"/>
</evidence>
<evidence type="ECO:0000303" key="11">
    <source>
    </source>
</evidence>
<evidence type="ECO:0000303" key="12">
    <source>
    </source>
</evidence>
<evidence type="ECO:0000303" key="13">
    <source>
    </source>
</evidence>
<evidence type="ECO:0000303" key="14">
    <source>
    </source>
</evidence>
<evidence type="ECO:0000305" key="15"/>
<evidence type="ECO:0000305" key="16">
    <source>
    </source>
</evidence>
<evidence type="ECO:0000312" key="17">
    <source>
        <dbReference type="EMBL" id="KRG92101.1"/>
    </source>
</evidence>
<gene>
    <name evidence="12" type="primary">LB4</name>
    <name evidence="13" type="synonym">GLB2-5</name>
    <name evidence="13" type="synonym">LBC2</name>
    <name evidence="17" type="ordered locus">Glyma_20G191200</name>
</gene>
<proteinExistence type="evidence at protein level"/>
<dbReference type="EMBL" id="J01301">
    <property type="protein sequence ID" value="AAA33980.1"/>
    <property type="molecule type" value="Genomic_DNA"/>
</dbReference>
<dbReference type="EMBL" id="CM000853">
    <property type="protein sequence ID" value="KRG92101.1"/>
    <property type="molecule type" value="Genomic_DNA"/>
</dbReference>
<dbReference type="EMBL" id="V00457">
    <property type="protein sequence ID" value="CAA23735.1"/>
    <property type="molecule type" value="Genomic_DNA"/>
</dbReference>
<dbReference type="RefSeq" id="NP_001235248.2">
    <property type="nucleotide sequence ID" value="NM_001248319.3"/>
</dbReference>
<dbReference type="SMR" id="P02236"/>
<dbReference type="STRING" id="3847.P02236"/>
<dbReference type="PaxDb" id="3847-GLYMA20G33290.1"/>
<dbReference type="ProMEX" id="P02236"/>
<dbReference type="EnsemblPlants" id="KRG92101">
    <property type="protein sequence ID" value="KRG92101"/>
    <property type="gene ID" value="GLYMA_20G191200"/>
</dbReference>
<dbReference type="GeneID" id="100527379"/>
<dbReference type="Gramene" id="KRG92101">
    <property type="protein sequence ID" value="KRG92101"/>
    <property type="gene ID" value="GLYMA_20G191200"/>
</dbReference>
<dbReference type="KEGG" id="gmx:100527379"/>
<dbReference type="eggNOG" id="KOG3378">
    <property type="taxonomic scope" value="Eukaryota"/>
</dbReference>
<dbReference type="HOGENOM" id="CLU_003827_11_2_1"/>
<dbReference type="InParanoid" id="P02236"/>
<dbReference type="OMA" id="LIMERAP"/>
<dbReference type="OrthoDB" id="2012505at2759"/>
<dbReference type="Proteomes" id="UP000008827">
    <property type="component" value="Chromosome 20"/>
</dbReference>
<dbReference type="GO" id="GO:0005829">
    <property type="term" value="C:cytosol"/>
    <property type="evidence" value="ECO:0007669"/>
    <property type="project" value="UniProtKB-SubCell"/>
</dbReference>
<dbReference type="GO" id="GO:0005634">
    <property type="term" value="C:nucleus"/>
    <property type="evidence" value="ECO:0007669"/>
    <property type="project" value="UniProtKB-SubCell"/>
</dbReference>
<dbReference type="GO" id="GO:0020037">
    <property type="term" value="F:heme binding"/>
    <property type="evidence" value="ECO:0007669"/>
    <property type="project" value="InterPro"/>
</dbReference>
<dbReference type="GO" id="GO:0046872">
    <property type="term" value="F:metal ion binding"/>
    <property type="evidence" value="ECO:0007669"/>
    <property type="project" value="UniProtKB-KW"/>
</dbReference>
<dbReference type="GO" id="GO:0019825">
    <property type="term" value="F:oxygen binding"/>
    <property type="evidence" value="ECO:0007669"/>
    <property type="project" value="InterPro"/>
</dbReference>
<dbReference type="GO" id="GO:0005344">
    <property type="term" value="F:oxygen carrier activity"/>
    <property type="evidence" value="ECO:0007669"/>
    <property type="project" value="UniProtKB-KW"/>
</dbReference>
<dbReference type="GO" id="GO:0009877">
    <property type="term" value="P:nodulation"/>
    <property type="evidence" value="ECO:0000314"/>
    <property type="project" value="UniProtKB"/>
</dbReference>
<dbReference type="GO" id="GO:0032025">
    <property type="term" value="P:response to cobalt ion"/>
    <property type="evidence" value="ECO:0000270"/>
    <property type="project" value="UniProtKB"/>
</dbReference>
<dbReference type="GO" id="GO:1901698">
    <property type="term" value="P:response to nitrogen compound"/>
    <property type="evidence" value="ECO:0000270"/>
    <property type="project" value="UniProtKB"/>
</dbReference>
<dbReference type="CDD" id="cd08923">
    <property type="entry name" value="class1-2_nsHbs_Lbs"/>
    <property type="match status" value="1"/>
</dbReference>
<dbReference type="Gene3D" id="1.10.490.10">
    <property type="entry name" value="Globins"/>
    <property type="match status" value="1"/>
</dbReference>
<dbReference type="InterPro" id="IPR000971">
    <property type="entry name" value="Globin"/>
</dbReference>
<dbReference type="InterPro" id="IPR009050">
    <property type="entry name" value="Globin-like_sf"/>
</dbReference>
<dbReference type="InterPro" id="IPR012292">
    <property type="entry name" value="Globin/Proto"/>
</dbReference>
<dbReference type="InterPro" id="IPR001032">
    <property type="entry name" value="Leghaemoglobin-like"/>
</dbReference>
<dbReference type="InterPro" id="IPR019824">
    <property type="entry name" value="Leghaemoglobin_Fe_BS"/>
</dbReference>
<dbReference type="PANTHER" id="PTHR22924">
    <property type="entry name" value="LEGHEMOGLOBIN-RELATED"/>
    <property type="match status" value="1"/>
</dbReference>
<dbReference type="PANTHER" id="PTHR22924:SF92">
    <property type="entry name" value="NON-SYMBIOTIC HEMOGLOBIN 2"/>
    <property type="match status" value="1"/>
</dbReference>
<dbReference type="Pfam" id="PF00042">
    <property type="entry name" value="Globin"/>
    <property type="match status" value="1"/>
</dbReference>
<dbReference type="PRINTS" id="PR00188">
    <property type="entry name" value="PLANTGLOBIN"/>
</dbReference>
<dbReference type="SUPFAM" id="SSF46458">
    <property type="entry name" value="Globin-like"/>
    <property type="match status" value="1"/>
</dbReference>
<dbReference type="PROSITE" id="PS01033">
    <property type="entry name" value="GLOBIN"/>
    <property type="match status" value="1"/>
</dbReference>
<dbReference type="PROSITE" id="PS00208">
    <property type="entry name" value="PLANT_GLOBIN"/>
    <property type="match status" value="1"/>
</dbReference>
<organism>
    <name type="scientific">Glycine max</name>
    <name type="common">Soybean</name>
    <name type="synonym">Glycine hispida</name>
    <dbReference type="NCBI Taxonomy" id="3847"/>
    <lineage>
        <taxon>Eukaryota</taxon>
        <taxon>Viridiplantae</taxon>
        <taxon>Streptophyta</taxon>
        <taxon>Embryophyta</taxon>
        <taxon>Tracheophyta</taxon>
        <taxon>Spermatophyta</taxon>
        <taxon>Magnoliopsida</taxon>
        <taxon>eudicotyledons</taxon>
        <taxon>Gunneridae</taxon>
        <taxon>Pentapetalae</taxon>
        <taxon>rosids</taxon>
        <taxon>fabids</taxon>
        <taxon>Fabales</taxon>
        <taxon>Fabaceae</taxon>
        <taxon>Papilionoideae</taxon>
        <taxon>50 kb inversion clade</taxon>
        <taxon>NPAAA clade</taxon>
        <taxon>indigoferoid/millettioid clade</taxon>
        <taxon>Phaseoleae</taxon>
        <taxon>Glycine</taxon>
        <taxon>Glycine subgen. Soja</taxon>
    </lineage>
</organism>
<feature type="initiator methionine" description="Removed" evidence="9 10 16">
    <location>
        <position position="1"/>
    </location>
</feature>
<feature type="chain" id="PRO_0000193004" description="Leghemoglobin 4">
    <location>
        <begin position="2"/>
        <end position="145"/>
    </location>
</feature>
<feature type="domain" description="Globin" evidence="5">
    <location>
        <begin position="3"/>
        <end position="145"/>
    </location>
</feature>
<feature type="binding site" evidence="2">
    <location>
        <position position="46"/>
    </location>
    <ligand>
        <name>heme b</name>
        <dbReference type="ChEBI" id="CHEBI:60344"/>
    </ligand>
</feature>
<feature type="binding site" evidence="2">
    <location>
        <position position="62"/>
    </location>
    <ligand>
        <name>O2</name>
        <dbReference type="ChEBI" id="CHEBI:15379"/>
    </ligand>
</feature>
<feature type="binding site" evidence="2">
    <location>
        <position position="65"/>
    </location>
    <ligand>
        <name>heme b</name>
        <dbReference type="ChEBI" id="CHEBI:60344"/>
    </ligand>
</feature>
<feature type="binding site" description="proximal binding residue" evidence="5">
    <location>
        <position position="93"/>
    </location>
    <ligand>
        <name>heme b</name>
        <dbReference type="ChEBI" id="CHEBI:60344"/>
    </ligand>
    <ligandPart>
        <name>Fe</name>
        <dbReference type="ChEBI" id="CHEBI:18248"/>
    </ligandPart>
</feature>
<feature type="binding site" evidence="2">
    <location>
        <position position="96"/>
    </location>
    <ligand>
        <name>heme b</name>
        <dbReference type="ChEBI" id="CHEBI:60344"/>
    </ligand>
</feature>
<feature type="modified residue" description="N-acetylglycine" evidence="7">
    <location>
        <position position="2"/>
    </location>
</feature>
<feature type="modified residue" description="Nitrated tyrosine" evidence="1">
    <location>
        <position position="26"/>
    </location>
</feature>
<feature type="modified residue" description="Nitrated tyrosine" evidence="1">
    <location>
        <position position="31"/>
    </location>
</feature>
<feature type="modified residue" description="Phosphoserine" evidence="3">
    <location>
        <position position="46"/>
    </location>
</feature>
<feature type="modified residue" description="Nitrated tyrosine" evidence="1">
    <location>
        <position position="134"/>
    </location>
</feature>
<feature type="sequence variant">
    <original>E</original>
    <variation>D</variation>
    <location>
        <position position="9"/>
    </location>
</feature>
<feature type="sequence variant">
    <original>I</original>
    <variation>V</variation>
    <location>
        <position position="98"/>
    </location>
</feature>
<feature type="sequence conflict" description="In Ref. 3; AA sequence." evidence="15" ref="3">
    <original>T</original>
    <variation>N</variation>
    <location>
        <position position="32"/>
    </location>
</feature>
<feature type="sequence conflict" description="In Ref. 5; AA sequence." evidence="15" ref="5">
    <original>PAA</original>
    <variation>FAV</variation>
    <location>
        <begin position="39"/>
        <end position="41"/>
    </location>
</feature>
<feature type="sequence conflict" description="In Ref. 3; AA sequence and 5; AA sequence." evidence="15" ref="3 5">
    <original>S</original>
    <variation>A</variation>
    <location>
        <position position="49"/>
    </location>
</feature>
<feature type="sequence conflict" description="In Ref. 5; AA sequence." evidence="15" ref="5">
    <original>D</original>
    <variation>N</variation>
    <location>
        <position position="53"/>
    </location>
</feature>
<feature type="sequence conflict" description="In Ref. 3; AA sequence and 5; AA sequence." evidence="15" ref="3 5">
    <original>S</original>
    <variation>T</variation>
    <location>
        <position position="55"/>
    </location>
</feature>
<feature type="sequence conflict" description="In Ref. 3; AA sequence." evidence="15" ref="3">
    <original>G</original>
    <variation>A</variation>
    <location>
        <position position="68"/>
    </location>
</feature>
<feature type="sequence conflict" description="In Ref. 5; AA sequence." evidence="15" ref="5">
    <location>
        <begin position="80"/>
        <end position="81"/>
    </location>
</feature>
<feature type="sequence conflict" description="In Ref. 3; AA sequence." evidence="15" ref="3">
    <original>N</original>
    <variation>S</variation>
    <location>
        <position position="80"/>
    </location>
</feature>
<feature type="sequence conflict" description="In Ref. 3; AA sequence." evidence="15" ref="3">
    <original>L</original>
    <variation>S</variation>
    <location>
        <position position="89"/>
    </location>
</feature>
<feature type="sequence conflict" description="In Ref. 3; AA sequence and 5; AA sequence." evidence="15" ref="3 5">
    <original>DPQ</original>
    <variation>NPE</variation>
    <location>
        <begin position="100"/>
        <end position="102"/>
    </location>
</feature>
<feature type="sequence conflict" description="In Ref. 3; AA sequence and 5; AA sequence." evidence="15" ref="3 5">
    <location>
        <position position="106"/>
    </location>
</feature>
<accession>P02236</accession>
<accession>A0A0R0EEJ9</accession>
<keyword id="KW-0007">Acetylation</keyword>
<keyword id="KW-0963">Cytoplasm</keyword>
<keyword id="KW-0903">Direct protein sequencing</keyword>
<keyword id="KW-0349">Heme</keyword>
<keyword id="KW-0408">Iron</keyword>
<keyword id="KW-0479">Metal-binding</keyword>
<keyword id="KW-0944">Nitration</keyword>
<keyword id="KW-0535">Nitrogen fixation</keyword>
<keyword id="KW-0536">Nodulation</keyword>
<keyword id="KW-0539">Nucleus</keyword>
<keyword id="KW-0561">Oxygen transport</keyword>
<keyword id="KW-0597">Phosphoprotein</keyword>
<keyword id="KW-1185">Reference proteome</keyword>
<keyword id="KW-0813">Transport</keyword>